<evidence type="ECO:0000250" key="1"/>
<evidence type="ECO:0000255" key="2">
    <source>
        <dbReference type="HAMAP-Rule" id="MF_00576"/>
    </source>
</evidence>
<evidence type="ECO:0000269" key="3">
    <source>
    </source>
</evidence>
<evidence type="ECO:0000303" key="4">
    <source>
    </source>
</evidence>
<evidence type="ECO:0000305" key="5">
    <source>
    </source>
</evidence>
<protein>
    <recommendedName>
        <fullName evidence="2">Gas vesicle protein A</fullName>
        <shortName evidence="2">GvpA</shortName>
    </recommendedName>
</protein>
<accession>P22453</accession>
<proteinExistence type="evidence at transcript level"/>
<keyword id="KW-0304">Gas vesicle</keyword>
<organism>
    <name type="scientific">Pseudanabaena galeata (strain PCC 6901)</name>
    <dbReference type="NCBI Taxonomy" id="47918"/>
    <lineage>
        <taxon>Bacteria</taxon>
        <taxon>Bacillati</taxon>
        <taxon>Cyanobacteriota</taxon>
        <taxon>Cyanophyceae</taxon>
        <taxon>Pseudanabaenales</taxon>
        <taxon>Pseudanabaenaceae</taxon>
        <taxon>Pseudanabaena</taxon>
    </lineage>
</organism>
<gene>
    <name evidence="2 4" type="primary">gvpA</name>
</gene>
<sequence>MAVEKVNSSSSLAEVIDRILDKGIVIDAWVRVSLVGIELLSIEARVVIASVETYLKYAEAVGLTASAAVPAA</sequence>
<name>GVPA_PSEGP</name>
<dbReference type="EMBL" id="X57731">
    <property type="protein sequence ID" value="CAA40898.1"/>
    <property type="molecule type" value="Genomic_DNA"/>
</dbReference>
<dbReference type="SMR" id="P22453"/>
<dbReference type="GO" id="GO:0033172">
    <property type="term" value="C:gas vesicle shell"/>
    <property type="evidence" value="ECO:0007669"/>
    <property type="project" value="UniProtKB-UniRule"/>
</dbReference>
<dbReference type="GO" id="GO:0012506">
    <property type="term" value="C:vesicle membrane"/>
    <property type="evidence" value="ECO:0007669"/>
    <property type="project" value="InterPro"/>
</dbReference>
<dbReference type="GO" id="GO:0005198">
    <property type="term" value="F:structural molecule activity"/>
    <property type="evidence" value="ECO:0007669"/>
    <property type="project" value="InterPro"/>
</dbReference>
<dbReference type="HAMAP" id="MF_00576">
    <property type="entry name" value="Gas_vesicle_A"/>
    <property type="match status" value="1"/>
</dbReference>
<dbReference type="InterPro" id="IPR000638">
    <property type="entry name" value="Gas-vesicle_GvpA-like"/>
</dbReference>
<dbReference type="InterPro" id="IPR047870">
    <property type="entry name" value="Gas_vesicle_GvpA"/>
</dbReference>
<dbReference type="InterPro" id="IPR050530">
    <property type="entry name" value="GvpA"/>
</dbReference>
<dbReference type="InterPro" id="IPR018493">
    <property type="entry name" value="GvpA-like_CS"/>
</dbReference>
<dbReference type="NCBIfam" id="NF006874">
    <property type="entry name" value="PRK09371.1"/>
    <property type="match status" value="1"/>
</dbReference>
<dbReference type="PANTHER" id="PTHR35344:SF4">
    <property type="entry name" value="GAS VESICLE PROTEIN A1"/>
    <property type="match status" value="1"/>
</dbReference>
<dbReference type="PANTHER" id="PTHR35344">
    <property type="entry name" value="GAS VESICLE STRUCTURAL PROTEIN 2-RELATED"/>
    <property type="match status" value="1"/>
</dbReference>
<dbReference type="Pfam" id="PF00741">
    <property type="entry name" value="Gas_vesicle"/>
    <property type="match status" value="1"/>
</dbReference>
<dbReference type="PROSITE" id="PS00234">
    <property type="entry name" value="GAS_VESICLE_A_1"/>
    <property type="match status" value="1"/>
</dbReference>
<dbReference type="PROSITE" id="PS00669">
    <property type="entry name" value="GAS_VESICLE_A_2"/>
    <property type="match status" value="1"/>
</dbReference>
<feature type="initiator methionine" description="Removed" evidence="1">
    <location>
        <position position="1"/>
    </location>
</feature>
<feature type="chain" id="PRO_0000199988" description="Gas vesicle protein A">
    <location>
        <begin position="2"/>
        <end position="72"/>
    </location>
</feature>
<reference key="1">
    <citation type="journal article" date="1991" name="Mol. Microbiol.">
        <title>Gas vesicle synthesis in the cyanobacterium Pseudanabaena sp.: occurrence of a single photoregulated gene.</title>
        <authorList>
            <person name="Damerval T."/>
            <person name="Castets A.M."/>
            <person name="Houmard J."/>
            <person name="Tandeau de Marsac N."/>
        </authorList>
    </citation>
    <scope>NUCLEOTIDE SEQUENCE [GENOMIC DNA]</scope>
    <scope>SUBCELLULAR LOCATION</scope>
    <scope>INDUCTION</scope>
    <source>
        <strain>PCC 6901</strain>
    </source>
</reference>
<comment type="function">
    <text evidence="2">Gas vesicles are hollow, gas filled proteinaceous nanostructures found in some microorganisms. During planktonic growth they allow positioning of the organism at a favorable depth for light or nutrient acquisition. GvpA forms the protein shell.</text>
</comment>
<comment type="subunit">
    <text evidence="2">The gas vesicle shell is 2 nm thick and consists of a single layer of this protein. It forms helical ribs nearly perpendicular to the long axis of the vesicle.</text>
</comment>
<comment type="subcellular location">
    <subcellularLocation>
        <location evidence="2 5">Gas vesicle shell</location>
    </subcellularLocation>
</comment>
<comment type="induction">
    <text evidence="3">Constitutively transcribed at low light (5 umol photon m(-2) sec(-1)), transcripts decrease rapidly on a shift to 50 umol photon m(-2) sec(-1).</text>
</comment>
<comment type="miscellaneous">
    <text evidence="3">Gas vesicles are 65 nm wide and between 300 and 2000 nm long in this organism.</text>
</comment>
<comment type="similarity">
    <text evidence="2">Belongs to the gas vesicle GvpA family.</text>
</comment>